<gene>
    <name evidence="1" type="primary">hisE</name>
    <name type="ordered locus">LMHCC_2070</name>
</gene>
<organism>
    <name type="scientific">Listeria monocytogenes serotype 4a (strain HCC23)</name>
    <dbReference type="NCBI Taxonomy" id="552536"/>
    <lineage>
        <taxon>Bacteria</taxon>
        <taxon>Bacillati</taxon>
        <taxon>Bacillota</taxon>
        <taxon>Bacilli</taxon>
        <taxon>Bacillales</taxon>
        <taxon>Listeriaceae</taxon>
        <taxon>Listeria</taxon>
    </lineage>
</organism>
<dbReference type="EC" id="3.6.1.31" evidence="1"/>
<dbReference type="EMBL" id="CP001175">
    <property type="protein sequence ID" value="ACK40409.1"/>
    <property type="molecule type" value="Genomic_DNA"/>
</dbReference>
<dbReference type="RefSeq" id="WP_012581852.1">
    <property type="nucleotide sequence ID" value="NC_011660.1"/>
</dbReference>
<dbReference type="SMR" id="B8DA64"/>
<dbReference type="KEGG" id="lmh:LMHCC_2070"/>
<dbReference type="HOGENOM" id="CLU_123337_0_0_9"/>
<dbReference type="UniPathway" id="UPA00031">
    <property type="reaction ID" value="UER00007"/>
</dbReference>
<dbReference type="GO" id="GO:0005737">
    <property type="term" value="C:cytoplasm"/>
    <property type="evidence" value="ECO:0007669"/>
    <property type="project" value="UniProtKB-SubCell"/>
</dbReference>
<dbReference type="GO" id="GO:0005524">
    <property type="term" value="F:ATP binding"/>
    <property type="evidence" value="ECO:0007669"/>
    <property type="project" value="UniProtKB-KW"/>
</dbReference>
<dbReference type="GO" id="GO:0004636">
    <property type="term" value="F:phosphoribosyl-ATP diphosphatase activity"/>
    <property type="evidence" value="ECO:0007669"/>
    <property type="project" value="UniProtKB-UniRule"/>
</dbReference>
<dbReference type="GO" id="GO:0000105">
    <property type="term" value="P:L-histidine biosynthetic process"/>
    <property type="evidence" value="ECO:0007669"/>
    <property type="project" value="UniProtKB-UniRule"/>
</dbReference>
<dbReference type="CDD" id="cd11534">
    <property type="entry name" value="NTP-PPase_HisIE_like"/>
    <property type="match status" value="1"/>
</dbReference>
<dbReference type="Gene3D" id="1.10.287.1080">
    <property type="entry name" value="MazG-like"/>
    <property type="match status" value="1"/>
</dbReference>
<dbReference type="HAMAP" id="MF_01020">
    <property type="entry name" value="HisE"/>
    <property type="match status" value="1"/>
</dbReference>
<dbReference type="InterPro" id="IPR008179">
    <property type="entry name" value="HisE"/>
</dbReference>
<dbReference type="InterPro" id="IPR021130">
    <property type="entry name" value="PRib-ATP_PPHydrolase-like"/>
</dbReference>
<dbReference type="NCBIfam" id="TIGR03188">
    <property type="entry name" value="histidine_hisI"/>
    <property type="match status" value="1"/>
</dbReference>
<dbReference type="PANTHER" id="PTHR42945">
    <property type="entry name" value="HISTIDINE BIOSYNTHESIS BIFUNCTIONAL PROTEIN"/>
    <property type="match status" value="1"/>
</dbReference>
<dbReference type="PANTHER" id="PTHR42945:SF9">
    <property type="entry name" value="HISTIDINE BIOSYNTHESIS BIFUNCTIONAL PROTEIN HISIE"/>
    <property type="match status" value="1"/>
</dbReference>
<dbReference type="Pfam" id="PF01503">
    <property type="entry name" value="PRA-PH"/>
    <property type="match status" value="1"/>
</dbReference>
<dbReference type="SUPFAM" id="SSF101386">
    <property type="entry name" value="all-alpha NTP pyrophosphatases"/>
    <property type="match status" value="1"/>
</dbReference>
<protein>
    <recommendedName>
        <fullName evidence="1">Phosphoribosyl-ATP pyrophosphatase</fullName>
        <shortName evidence="1">PRA-PH</shortName>
        <ecNumber evidence="1">3.6.1.31</ecNumber>
    </recommendedName>
</protein>
<name>HIS2_LISMH</name>
<reference key="1">
    <citation type="journal article" date="2011" name="J. Bacteriol.">
        <title>Genome sequence of lineage III Listeria monocytogenes strain HCC23.</title>
        <authorList>
            <person name="Steele C.L."/>
            <person name="Donaldson J.R."/>
            <person name="Paul D."/>
            <person name="Banes M.M."/>
            <person name="Arick T."/>
            <person name="Bridges S.M."/>
            <person name="Lawrence M.L."/>
        </authorList>
    </citation>
    <scope>NUCLEOTIDE SEQUENCE [LARGE SCALE GENOMIC DNA]</scope>
    <source>
        <strain>HCC23</strain>
    </source>
</reference>
<sequence length="103" mass="11817">MLNDLYEEIKLRKEQPKEGSYTNYLFDKGLDKILKKVGEEATEVVIAAKNDKQELIAEVSDLTYHLLVLLAEKNIPLAAIQTELKNREGKLSTTRDRKEINDL</sequence>
<comment type="catalytic activity">
    <reaction evidence="1">
        <text>1-(5-phospho-beta-D-ribosyl)-ATP + H2O = 1-(5-phospho-beta-D-ribosyl)-5'-AMP + diphosphate + H(+)</text>
        <dbReference type="Rhea" id="RHEA:22828"/>
        <dbReference type="ChEBI" id="CHEBI:15377"/>
        <dbReference type="ChEBI" id="CHEBI:15378"/>
        <dbReference type="ChEBI" id="CHEBI:33019"/>
        <dbReference type="ChEBI" id="CHEBI:59457"/>
        <dbReference type="ChEBI" id="CHEBI:73183"/>
        <dbReference type="EC" id="3.6.1.31"/>
    </reaction>
</comment>
<comment type="pathway">
    <text evidence="1">Amino-acid biosynthesis; L-histidine biosynthesis; L-histidine from 5-phospho-alpha-D-ribose 1-diphosphate: step 2/9.</text>
</comment>
<comment type="subcellular location">
    <subcellularLocation>
        <location evidence="1">Cytoplasm</location>
    </subcellularLocation>
</comment>
<comment type="similarity">
    <text evidence="1">Belongs to the PRA-PH family.</text>
</comment>
<accession>B8DA64</accession>
<evidence type="ECO:0000255" key="1">
    <source>
        <dbReference type="HAMAP-Rule" id="MF_01020"/>
    </source>
</evidence>
<keyword id="KW-0028">Amino-acid biosynthesis</keyword>
<keyword id="KW-0067">ATP-binding</keyword>
<keyword id="KW-0963">Cytoplasm</keyword>
<keyword id="KW-0368">Histidine biosynthesis</keyword>
<keyword id="KW-0378">Hydrolase</keyword>
<keyword id="KW-0547">Nucleotide-binding</keyword>
<proteinExistence type="inferred from homology"/>
<feature type="chain" id="PRO_1000149053" description="Phosphoribosyl-ATP pyrophosphatase">
    <location>
        <begin position="1"/>
        <end position="103"/>
    </location>
</feature>